<name>GLGA_CLOAB</name>
<organism>
    <name type="scientific">Clostridium acetobutylicum (strain ATCC 824 / DSM 792 / JCM 1419 / IAM 19013 / LMG 5710 / NBRC 13948 / NRRL B-527 / VKM B-1787 / 2291 / W)</name>
    <dbReference type="NCBI Taxonomy" id="272562"/>
    <lineage>
        <taxon>Bacteria</taxon>
        <taxon>Bacillati</taxon>
        <taxon>Bacillota</taxon>
        <taxon>Clostridia</taxon>
        <taxon>Eubacteriales</taxon>
        <taxon>Clostridiaceae</taxon>
        <taxon>Clostridium</taxon>
    </lineage>
</organism>
<protein>
    <recommendedName>
        <fullName evidence="1">Glycogen synthase</fullName>
        <ecNumber evidence="1">2.4.1.21</ecNumber>
    </recommendedName>
    <alternativeName>
        <fullName evidence="1">Starch [bacterial glycogen] synthase</fullName>
    </alternativeName>
</protein>
<comment type="function">
    <text evidence="1">Synthesizes alpha-1,4-glucan chains using ADP-glucose.</text>
</comment>
<comment type="catalytic activity">
    <reaction evidence="1">
        <text>[(1-&gt;4)-alpha-D-glucosyl](n) + ADP-alpha-D-glucose = [(1-&gt;4)-alpha-D-glucosyl](n+1) + ADP + H(+)</text>
        <dbReference type="Rhea" id="RHEA:18189"/>
        <dbReference type="Rhea" id="RHEA-COMP:9584"/>
        <dbReference type="Rhea" id="RHEA-COMP:9587"/>
        <dbReference type="ChEBI" id="CHEBI:15378"/>
        <dbReference type="ChEBI" id="CHEBI:15444"/>
        <dbReference type="ChEBI" id="CHEBI:57498"/>
        <dbReference type="ChEBI" id="CHEBI:456216"/>
        <dbReference type="EC" id="2.4.1.21"/>
    </reaction>
</comment>
<comment type="pathway">
    <text evidence="1">Glycan biosynthesis; glycogen biosynthesis.</text>
</comment>
<comment type="similarity">
    <text evidence="1">Belongs to the glycosyltransferase 1 family. Bacterial/plant glycogen synthase subfamily.</text>
</comment>
<reference key="1">
    <citation type="journal article" date="2001" name="J. Bacteriol.">
        <title>Genome sequence and comparative analysis of the solvent-producing bacterium Clostridium acetobutylicum.</title>
        <authorList>
            <person name="Noelling J."/>
            <person name="Breton G."/>
            <person name="Omelchenko M.V."/>
            <person name="Makarova K.S."/>
            <person name="Zeng Q."/>
            <person name="Gibson R."/>
            <person name="Lee H.M."/>
            <person name="Dubois J."/>
            <person name="Qiu D."/>
            <person name="Hitti J."/>
            <person name="Wolf Y.I."/>
            <person name="Tatusov R.L."/>
            <person name="Sabathe F."/>
            <person name="Doucette-Stamm L.A."/>
            <person name="Soucaille P."/>
            <person name="Daly M.J."/>
            <person name="Bennett G.N."/>
            <person name="Koonin E.V."/>
            <person name="Smith D.R."/>
        </authorList>
    </citation>
    <scope>NUCLEOTIDE SEQUENCE [LARGE SCALE GENOMIC DNA]</scope>
    <source>
        <strain>ATCC 824 / DSM 792 / JCM 1419 / IAM 19013 / LMG 5710 / NBRC 13948 / NRRL B-527 / VKM B-1787 / 2291 / W</strain>
    </source>
</reference>
<sequence>MKILFASSESYPFIKTGGLGDVSYALPKALRKIGIDARVIIPKYSDIPEYFRYNTHHIASFGVPVGWRSQYGGLEYYEYDGVPFYFIDNDYYFKRSGLYGYYDDGERFAYFSRGVLQAITYMQDFNPDIIQCNDWQTAIIPVLLKDHYRNYRNYNHIKTIFTIHNLKYQGVFGKSVLGELLCLNEGYYNENALKFYDGISFMKGGILFSDKLSTVSRTYAEEIKDPYYGEHLDGLLRSRSYDLWGIVNGIDYDILNPETDKDLFFNFDSSTLYNKTKNKIELQKMLNLPVSENIPMIGIVSRLVSQKGLDLISCVLEDLLQDGIQLVVLGTGDAKYENMFKYFAWKYPNKLSANIQFNNSLAQKIYGASDMFLMPSKFEPCGIGQLIALRYGSLPIVRETGGLKDTVRPFNPITGEGNGFSFTNYNAHDMLHVIRNAEYFYYNEKYNWNKLVQTAMNDDNSWSKSAEIYRNLYMSVL</sequence>
<accession>Q97GX6</accession>
<dbReference type="EC" id="2.4.1.21" evidence="1"/>
<dbReference type="EMBL" id="AE001437">
    <property type="protein sequence ID" value="AAK80196.1"/>
    <property type="molecule type" value="Genomic_DNA"/>
</dbReference>
<dbReference type="PIR" id="A97176">
    <property type="entry name" value="A97176"/>
</dbReference>
<dbReference type="RefSeq" id="NP_348856.1">
    <property type="nucleotide sequence ID" value="NC_003030.1"/>
</dbReference>
<dbReference type="RefSeq" id="WP_010965537.1">
    <property type="nucleotide sequence ID" value="NC_003030.1"/>
</dbReference>
<dbReference type="SMR" id="Q97GX6"/>
<dbReference type="STRING" id="272562.CA_C2239"/>
<dbReference type="CAZy" id="GT5">
    <property type="family name" value="Glycosyltransferase Family 5"/>
</dbReference>
<dbReference type="GeneID" id="44998718"/>
<dbReference type="KEGG" id="cac:CA_C2239"/>
<dbReference type="PATRIC" id="fig|272562.8.peg.2440"/>
<dbReference type="eggNOG" id="COG0297">
    <property type="taxonomic scope" value="Bacteria"/>
</dbReference>
<dbReference type="HOGENOM" id="CLU_009583_18_2_9"/>
<dbReference type="OrthoDB" id="9808590at2"/>
<dbReference type="UniPathway" id="UPA00164"/>
<dbReference type="Proteomes" id="UP000000814">
    <property type="component" value="Chromosome"/>
</dbReference>
<dbReference type="GO" id="GO:0009011">
    <property type="term" value="F:alpha-1,4-glucan glucosyltransferase (ADP-glucose donor) activity"/>
    <property type="evidence" value="ECO:0007669"/>
    <property type="project" value="UniProtKB-UniRule"/>
</dbReference>
<dbReference type="GO" id="GO:0004373">
    <property type="term" value="F:alpha-1,4-glucan glucosyltransferase (UDP-glucose donor) activity"/>
    <property type="evidence" value="ECO:0007669"/>
    <property type="project" value="InterPro"/>
</dbReference>
<dbReference type="GO" id="GO:0005978">
    <property type="term" value="P:glycogen biosynthetic process"/>
    <property type="evidence" value="ECO:0007669"/>
    <property type="project" value="UniProtKB-UniRule"/>
</dbReference>
<dbReference type="CDD" id="cd03791">
    <property type="entry name" value="GT5_Glycogen_synthase_DULL1-like"/>
    <property type="match status" value="1"/>
</dbReference>
<dbReference type="Gene3D" id="3.40.50.2000">
    <property type="entry name" value="Glycogen Phosphorylase B"/>
    <property type="match status" value="2"/>
</dbReference>
<dbReference type="HAMAP" id="MF_00484">
    <property type="entry name" value="Glycogen_synth"/>
    <property type="match status" value="1"/>
</dbReference>
<dbReference type="InterPro" id="IPR001296">
    <property type="entry name" value="Glyco_trans_1"/>
</dbReference>
<dbReference type="InterPro" id="IPR011835">
    <property type="entry name" value="GS/SS"/>
</dbReference>
<dbReference type="InterPro" id="IPR013534">
    <property type="entry name" value="Starch_synth_cat_dom"/>
</dbReference>
<dbReference type="NCBIfam" id="TIGR02095">
    <property type="entry name" value="glgA"/>
    <property type="match status" value="1"/>
</dbReference>
<dbReference type="NCBIfam" id="NF001898">
    <property type="entry name" value="PRK00654.1-1"/>
    <property type="match status" value="1"/>
</dbReference>
<dbReference type="PANTHER" id="PTHR45825:SF11">
    <property type="entry name" value="ALPHA AMYLASE DOMAIN-CONTAINING PROTEIN"/>
    <property type="match status" value="1"/>
</dbReference>
<dbReference type="PANTHER" id="PTHR45825">
    <property type="entry name" value="GRANULE-BOUND STARCH SYNTHASE 1, CHLOROPLASTIC/AMYLOPLASTIC"/>
    <property type="match status" value="1"/>
</dbReference>
<dbReference type="Pfam" id="PF08323">
    <property type="entry name" value="Glyco_transf_5"/>
    <property type="match status" value="1"/>
</dbReference>
<dbReference type="Pfam" id="PF00534">
    <property type="entry name" value="Glycos_transf_1"/>
    <property type="match status" value="1"/>
</dbReference>
<dbReference type="SUPFAM" id="SSF53756">
    <property type="entry name" value="UDP-Glycosyltransferase/glycogen phosphorylase"/>
    <property type="match status" value="1"/>
</dbReference>
<evidence type="ECO:0000255" key="1">
    <source>
        <dbReference type="HAMAP-Rule" id="MF_00484"/>
    </source>
</evidence>
<keyword id="KW-0320">Glycogen biosynthesis</keyword>
<keyword id="KW-0328">Glycosyltransferase</keyword>
<keyword id="KW-1185">Reference proteome</keyword>
<keyword id="KW-0808">Transferase</keyword>
<feature type="chain" id="PRO_0000188607" description="Glycogen synthase">
    <location>
        <begin position="1"/>
        <end position="477"/>
    </location>
</feature>
<feature type="binding site" evidence="1">
    <location>
        <position position="15"/>
    </location>
    <ligand>
        <name>ADP-alpha-D-glucose</name>
        <dbReference type="ChEBI" id="CHEBI:57498"/>
    </ligand>
</feature>
<gene>
    <name evidence="1" type="primary">glgA</name>
    <name type="ordered locus">CA_C2239</name>
</gene>
<proteinExistence type="inferred from homology"/>